<gene>
    <name evidence="4 9" type="primary">IGHV4-39</name>
</gene>
<accession>P01824</accession>
<accession>A0A0A0MS13</accession>
<feature type="signal peptide" evidence="3">
    <location>
        <begin position="1"/>
        <end position="26"/>
    </location>
</feature>
<feature type="chain" id="PRO_0000059912" description="Immunoglobulin heavy variable 4-39" evidence="3">
    <location>
        <begin position="27"/>
        <end position="125"/>
    </location>
</feature>
<feature type="domain" description="Ig-like" evidence="2">
    <location>
        <begin position="27"/>
        <end position="125" status="greater than"/>
    </location>
</feature>
<feature type="region of interest" description="Framework-1" evidence="1">
    <location>
        <begin position="27"/>
        <end position="51"/>
    </location>
</feature>
<feature type="region of interest" description="Complementarity-determining-1" evidence="1">
    <location>
        <begin position="52"/>
        <end position="61"/>
    </location>
</feature>
<feature type="region of interest" description="Framework-2" evidence="1">
    <location>
        <begin position="62"/>
        <end position="78"/>
    </location>
</feature>
<feature type="region of interest" description="Complementarity-determining-2" evidence="1">
    <location>
        <begin position="79"/>
        <end position="85"/>
    </location>
</feature>
<feature type="region of interest" description="Framework-3" evidence="1">
    <location>
        <begin position="86"/>
        <end position="123"/>
    </location>
</feature>
<feature type="region of interest" description="Complementarity-determining-3" evidence="1">
    <location>
        <begin position="124"/>
        <end position="125" status="greater than"/>
    </location>
</feature>
<feature type="disulfide bond" evidence="2">
    <location>
        <begin position="48"/>
        <end position="123"/>
    </location>
</feature>
<feature type="sequence conflict" description="In Ref. 2; AA sequence." evidence="10" ref="2">
    <original>Q</original>
    <variation>R</variation>
    <location>
        <position position="27"/>
    </location>
</feature>
<feature type="sequence conflict" description="In Ref. 2; AA sequence." evidence="10" ref="2">
    <original>T</original>
    <variation>I</variation>
    <location>
        <position position="49"/>
    </location>
</feature>
<feature type="sequence conflict" description="In Ref. 2; AA sequence." evidence="10" ref="2">
    <original>SISSSS</original>
    <variation>PIRRTG</variation>
    <location>
        <begin position="54"/>
        <end position="59"/>
    </location>
</feature>
<feature type="sequence conflict" description="In Ref. 2; AA sequence." evidence="10" ref="2">
    <original>SI</original>
    <variation>GV</variation>
    <location>
        <begin position="78"/>
        <end position="79"/>
    </location>
</feature>
<feature type="sequence conflict" description="In Ref. 2; AA sequence." evidence="10" ref="2">
    <original>S</original>
    <variation>T</variation>
    <location>
        <position position="82"/>
    </location>
</feature>
<feature type="sequence conflict" description="In Ref. 2; AA sequence." evidence="10" ref="2">
    <original>T</original>
    <variation>I</variation>
    <location>
        <position position="85"/>
    </location>
</feature>
<feature type="sequence conflict" description="In Ref. 2; AA sequence." evidence="10" ref="2">
    <original>KS</original>
    <variation>RG</variation>
    <location>
        <begin position="92"/>
        <end position="93"/>
    </location>
</feature>
<feature type="sequence conflict" description="In Ref. 2; AA sequence." evidence="10" ref="2">
    <original>K</original>
    <variation>R</variation>
    <location>
        <position position="103"/>
    </location>
</feature>
<feature type="sequence conflict" description="In Ref. 2; AA sequence." evidence="10" ref="2">
    <original>KLSSVT</original>
    <variation>NLRSMS</variation>
    <location>
        <begin position="109"/>
        <end position="114"/>
    </location>
</feature>
<feature type="sequence conflict" description="In Ref. 2; AA sequence." evidence="10" ref="2">
    <original>V</original>
    <variation>M</variation>
    <location>
        <position position="120"/>
    </location>
</feature>
<feature type="non-terminal residue">
    <location>
        <position position="125"/>
    </location>
</feature>
<protein>
    <recommendedName>
        <fullName evidence="4 9">Immunoglobulin heavy variable 4-39</fullName>
    </recommendedName>
    <alternativeName>
        <fullName evidence="11">Ig heavy chain V-II region WAH</fullName>
    </alternativeName>
</protein>
<comment type="function">
    <text evidence="5 6 7 8">V region of the variable domain of immunoglobulin heavy chains that participates in the antigen recognition (PubMed:24600447). Immunoglobulins, also known as antibodies, are membrane-bound or secreted glycoproteins produced by B lymphocytes. In the recognition phase of humoral immunity, the membrane-bound immunoglobulins serve as receptors which, upon binding of a specific antigen, trigger the clonal expansion and differentiation of B lymphocytes into immunoglobulins-secreting plasma cells. Secreted immunoglobulins mediate the effector phase of humoral immunity, which results in the elimination of bound antigens (PubMed:20176268, PubMed:22158414). The antigen binding site is formed by the variable domain of one heavy chain, together with that of its associated light chain. Thus, each immunoglobulin has two antigen binding sites with remarkable affinity for a particular antigen. The variable domains are assembled by a process called V-(D)-J rearrangement and can then be subjected to somatic hypermutations which, after exposure to antigen and selection, allow affinity maturation for a particular antigen (PubMed:17576170, PubMed:20176268).</text>
</comment>
<comment type="subunit">
    <text evidence="6">Immunoglobulins are composed of two identical heavy chains and two identical light chains; disulfide-linked.</text>
</comment>
<comment type="subcellular location">
    <subcellularLocation>
        <location evidence="6 7">Secreted</location>
    </subcellularLocation>
    <subcellularLocation>
        <location evidence="6 7">Cell membrane</location>
    </subcellularLocation>
</comment>
<comment type="polymorphism">
    <text evidence="10">There are several alleles. The sequence shown is that of IMGT allele IGHV4-39*01.</text>
</comment>
<comment type="caution">
    <text evidence="10">For examples of full-length immunoglobulin heavy chains (of different isotypes) see AC P0DOX2, AC P0DOX3, AC P0DOX4, AC P0DOX5 and AC P0DOX6.</text>
</comment>
<evidence type="ECO:0000250" key="1">
    <source>
        <dbReference type="UniProtKB" id="P23083"/>
    </source>
</evidence>
<evidence type="ECO:0000255" key="2">
    <source>
        <dbReference type="PROSITE-ProRule" id="PRU00114"/>
    </source>
</evidence>
<evidence type="ECO:0000269" key="3">
    <source>
    </source>
</evidence>
<evidence type="ECO:0000303" key="4">
    <source>
    </source>
</evidence>
<evidence type="ECO:0000303" key="5">
    <source>
    </source>
</evidence>
<evidence type="ECO:0000303" key="6">
    <source>
    </source>
</evidence>
<evidence type="ECO:0000303" key="7">
    <source>
    </source>
</evidence>
<evidence type="ECO:0000303" key="8">
    <source>
    </source>
</evidence>
<evidence type="ECO:0000303" key="9">
    <source ref="4"/>
</evidence>
<evidence type="ECO:0000305" key="10"/>
<evidence type="ECO:0000305" key="11">
    <source>
    </source>
</evidence>
<keyword id="KW-0002">3D-structure</keyword>
<keyword id="KW-1064">Adaptive immunity</keyword>
<keyword id="KW-1003">Cell membrane</keyword>
<keyword id="KW-0903">Direct protein sequencing</keyword>
<keyword id="KW-1015">Disulfide bond</keyword>
<keyword id="KW-0391">Immunity</keyword>
<keyword id="KW-1280">Immunoglobulin</keyword>
<keyword id="KW-0393">Immunoglobulin domain</keyword>
<keyword id="KW-0472">Membrane</keyword>
<keyword id="KW-1267">Proteomics identification</keyword>
<keyword id="KW-1185">Reference proteome</keyword>
<keyword id="KW-0964">Secreted</keyword>
<keyword id="KW-0732">Signal</keyword>
<organism>
    <name type="scientific">Homo sapiens</name>
    <name type="common">Human</name>
    <dbReference type="NCBI Taxonomy" id="9606"/>
    <lineage>
        <taxon>Eukaryota</taxon>
        <taxon>Metazoa</taxon>
        <taxon>Chordata</taxon>
        <taxon>Craniata</taxon>
        <taxon>Vertebrata</taxon>
        <taxon>Euteleostomi</taxon>
        <taxon>Mammalia</taxon>
        <taxon>Eutheria</taxon>
        <taxon>Euarchontoglires</taxon>
        <taxon>Primates</taxon>
        <taxon>Haplorrhini</taxon>
        <taxon>Catarrhini</taxon>
        <taxon>Hominidae</taxon>
        <taxon>Homo</taxon>
    </lineage>
</organism>
<proteinExistence type="evidence at protein level"/>
<sequence>MDLMCKKMKHLWFFLLLVAAPRWVLSQLQLQESGPGLVKPSETLSLTCTVSGGSISSSSYYWGWIRQPPGKGLEWIGSIYYSGSTYYNPSLKSRVTISVDTSKNQFSLKLSSVTAADTAVYYCAR</sequence>
<reference key="1">
    <citation type="journal article" date="2003" name="Nature">
        <title>The DNA sequence and analysis of human chromosome 14.</title>
        <authorList>
            <person name="Heilig R."/>
            <person name="Eckenberg R."/>
            <person name="Petit J.-L."/>
            <person name="Fonknechten N."/>
            <person name="Da Silva C."/>
            <person name="Cattolico L."/>
            <person name="Levy M."/>
            <person name="Barbe V."/>
            <person name="De Berardinis V."/>
            <person name="Ureta-Vidal A."/>
            <person name="Pelletier E."/>
            <person name="Vico V."/>
            <person name="Anthouard V."/>
            <person name="Rowen L."/>
            <person name="Madan A."/>
            <person name="Qin S."/>
            <person name="Sun H."/>
            <person name="Du H."/>
            <person name="Pepin K."/>
            <person name="Artiguenave F."/>
            <person name="Robert C."/>
            <person name="Cruaud C."/>
            <person name="Bruels T."/>
            <person name="Jaillon O."/>
            <person name="Friedlander L."/>
            <person name="Samson G."/>
            <person name="Brottier P."/>
            <person name="Cure S."/>
            <person name="Segurens B."/>
            <person name="Aniere F."/>
            <person name="Samain S."/>
            <person name="Crespeau H."/>
            <person name="Abbasi N."/>
            <person name="Aiach N."/>
            <person name="Boscus D."/>
            <person name="Dickhoff R."/>
            <person name="Dors M."/>
            <person name="Dubois I."/>
            <person name="Friedman C."/>
            <person name="Gouyvenoux M."/>
            <person name="James R."/>
            <person name="Madan A."/>
            <person name="Mairey-Estrada B."/>
            <person name="Mangenot S."/>
            <person name="Martins N."/>
            <person name="Menard M."/>
            <person name="Oztas S."/>
            <person name="Ratcliffe A."/>
            <person name="Shaffer T."/>
            <person name="Trask B."/>
            <person name="Vacherie B."/>
            <person name="Bellemere C."/>
            <person name="Belser C."/>
            <person name="Besnard-Gonnet M."/>
            <person name="Bartol-Mavel D."/>
            <person name="Boutard M."/>
            <person name="Briez-Silla S."/>
            <person name="Combette S."/>
            <person name="Dufosse-Laurent V."/>
            <person name="Ferron C."/>
            <person name="Lechaplais C."/>
            <person name="Louesse C."/>
            <person name="Muselet D."/>
            <person name="Magdelenat G."/>
            <person name="Pateau E."/>
            <person name="Petit E."/>
            <person name="Sirvain-Trukniewicz P."/>
            <person name="Trybou A."/>
            <person name="Vega-Czarny N."/>
            <person name="Bataille E."/>
            <person name="Bluet E."/>
            <person name="Bordelais I."/>
            <person name="Dubois M."/>
            <person name="Dumont C."/>
            <person name="Guerin T."/>
            <person name="Haffray S."/>
            <person name="Hammadi R."/>
            <person name="Muanga J."/>
            <person name="Pellouin V."/>
            <person name="Robert D."/>
            <person name="Wunderle E."/>
            <person name="Gauguet G."/>
            <person name="Roy A."/>
            <person name="Sainte-Marthe L."/>
            <person name="Verdier J."/>
            <person name="Verdier-Discala C."/>
            <person name="Hillier L.W."/>
            <person name="Fulton L."/>
            <person name="McPherson J."/>
            <person name="Matsuda F."/>
            <person name="Wilson R."/>
            <person name="Scarpelli C."/>
            <person name="Gyapay G."/>
            <person name="Wincker P."/>
            <person name="Saurin W."/>
            <person name="Quetier F."/>
            <person name="Waterston R."/>
            <person name="Hood L."/>
            <person name="Weissenbach J."/>
        </authorList>
    </citation>
    <scope>NUCLEOTIDE SEQUENCE [LARGE SCALE GENOMIC DNA] (IMGT ALLELE IGHV4-39*01)</scope>
</reference>
<reference key="2">
    <citation type="journal article" date="1982" name="Proc. Natl. Acad. Sci. U.S.A.">
        <title>Complete amino acid sequence of the delta heavy chain of human immunoglobulin D.</title>
        <authorList>
            <person name="Takahashi N."/>
            <person name="Tetaert D."/>
            <person name="Debuire B."/>
            <person name="Lin L.-C."/>
            <person name="Putnam F.W."/>
        </authorList>
    </citation>
    <scope>PROTEIN SEQUENCE OF 27-125</scope>
</reference>
<reference key="3">
    <citation type="journal article" date="2001" name="Exp. Clin. Immunogenet.">
        <title>Nomenclature of the human immunoglobulin heavy (IGH) genes.</title>
        <authorList>
            <person name="Lefranc M.P."/>
        </authorList>
    </citation>
    <scope>NOMENCLATURE</scope>
</reference>
<reference key="4">
    <citation type="book" date="2001" name="The Immunoglobulin FactsBook.">
        <title>The Immunoglobulin FactsBook.</title>
        <editorList>
            <person name="Lefranc M.P."/>
            <person name="Lefranc G."/>
        </editorList>
        <authorList>
            <person name="Lefranc M.P."/>
            <person name="Lefranc G."/>
        </authorList>
    </citation>
    <scope>NOMENCLATURE</scope>
</reference>
<reference key="5">
    <citation type="journal article" date="2007" name="Annu. Rev. Genet.">
        <title>Immunoglobulin somatic hypermutation.</title>
        <authorList>
            <person name="Teng G."/>
            <person name="Papavasiliou F.N."/>
        </authorList>
    </citation>
    <scope>REVIEW ON SOMATIC HYPERMUTATION</scope>
</reference>
<reference key="6">
    <citation type="journal article" date="2010" name="J. Allergy Clin. Immunol.">
        <title>Structure and function of immunoglobulins.</title>
        <authorList>
            <person name="Schroeder H.W. Jr."/>
            <person name="Cavacini L."/>
        </authorList>
    </citation>
    <scope>REVIEW ON IMMUNOGLOBULINS</scope>
</reference>
<reference key="7">
    <citation type="journal article" date="2012" name="Nat. Rev. Immunol.">
        <title>Molecular programming of B cell memory.</title>
        <authorList>
            <person name="McHeyzer-Williams M."/>
            <person name="Okitsu S."/>
            <person name="Wang N."/>
            <person name="McHeyzer-Williams L."/>
        </authorList>
    </citation>
    <scope>REVIEW ON FUNCTION</scope>
</reference>
<reference key="8">
    <citation type="journal article" date="2014" name="Front. Immunol.">
        <title>Immunoglobulin and T Cell Receptor Genes: IMGT((R)) and the Birth and Rise of Immunoinformatics.</title>
        <authorList>
            <person name="Lefranc M.P."/>
        </authorList>
    </citation>
    <scope>NOMENCLATURE</scope>
</reference>
<reference key="9">
    <citation type="journal article" date="2005" name="J. Mol. Biol.">
        <title>Semi-extended solution structure of human myeloma immunoglobulin D determined by constrained X-ray scattering.</title>
        <authorList>
            <person name="Sun Z."/>
            <person name="Almogren A."/>
            <person name="Furtado P.B."/>
            <person name="Chowdhury B."/>
            <person name="Kerr M.A."/>
            <person name="Perkins S.J."/>
        </authorList>
    </citation>
    <scope>STRUCTURE BY NMR OF 27-125</scope>
</reference>
<name>HV439_HUMAN</name>
<dbReference type="EMBL" id="AC244452">
    <property type="status" value="NOT_ANNOTATED_CDS"/>
    <property type="molecule type" value="Genomic_DNA"/>
</dbReference>
<dbReference type="PIR" id="A02099">
    <property type="entry name" value="D2HUWA"/>
</dbReference>
<dbReference type="PDB" id="1ZVO">
    <property type="method" value="X-ray"/>
    <property type="chains" value="C/D=27-125"/>
</dbReference>
<dbReference type="PDBsum" id="1ZVO"/>
<dbReference type="EMDB" id="EMD-13550"/>
<dbReference type="EMDB" id="EMD-13563"/>
<dbReference type="EMDB" id="EMD-13564"/>
<dbReference type="EMDB" id="EMD-14474"/>
<dbReference type="EMDB" id="EMD-14783"/>
<dbReference type="EMDB" id="EMD-15971"/>
<dbReference type="EMDB" id="EMD-18807"/>
<dbReference type="EMDB" id="EMD-25606"/>
<dbReference type="EMDB" id="EMD-28182"/>
<dbReference type="EMDB" id="EMD-28728"/>
<dbReference type="EMDB" id="EMD-28730"/>
<dbReference type="EMDB" id="EMD-36575"/>
<dbReference type="EMDB" id="EMD-38288"/>
<dbReference type="EMDB" id="EMD-41468"/>
<dbReference type="EMDB" id="EMD-41824"/>
<dbReference type="EMDB" id="EMD-41826"/>
<dbReference type="EMDB" id="EMD-43008"/>
<dbReference type="EMDB" id="EMD-4398"/>
<dbReference type="SMR" id="P01824"/>
<dbReference type="FunCoup" id="P01824">
    <property type="interactions" value="411"/>
</dbReference>
<dbReference type="IMGT_GENE-DB" id="IGHV4-39"/>
<dbReference type="GlyConnect" id="276">
    <property type="glycosylation" value="4 O-Linked glycans"/>
</dbReference>
<dbReference type="GlyCosmos" id="P01824">
    <property type="glycosylation" value="No site information, 7 glycans"/>
</dbReference>
<dbReference type="GlyGen" id="P01824">
    <property type="glycosylation" value="1 site, 7 O-linked glycans (1 site)"/>
</dbReference>
<dbReference type="BioMuta" id="IGHV4-39"/>
<dbReference type="DMDM" id="123827"/>
<dbReference type="jPOST" id="P01824"/>
<dbReference type="MassIVE" id="P01824"/>
<dbReference type="Ensembl" id="ENST00000390619.2">
    <property type="protein sequence ID" value="ENSP00000375028.2"/>
    <property type="gene ID" value="ENSG00000211959.2"/>
</dbReference>
<dbReference type="Ensembl" id="ENST00000633618.1">
    <property type="protein sequence ID" value="ENSP00000488798.1"/>
    <property type="gene ID" value="ENSG00000282579.1"/>
</dbReference>
<dbReference type="UCSC" id="uc059ggl.1">
    <property type="organism name" value="human"/>
</dbReference>
<dbReference type="AGR" id="HGNC:5651"/>
<dbReference type="GeneCards" id="IGHV4-39"/>
<dbReference type="HGNC" id="HGNC:5651">
    <property type="gene designation" value="IGHV4-39"/>
</dbReference>
<dbReference type="HPA" id="ENSG00000211959">
    <property type="expression patterns" value="Group enriched (lymphoid tissue, urinary bladder)"/>
</dbReference>
<dbReference type="neXtProt" id="NX_P01824"/>
<dbReference type="OpenTargets" id="ENSG00000211959"/>
<dbReference type="VEuPathDB" id="HostDB:ENSG00000211959"/>
<dbReference type="GeneTree" id="ENSGT01030000234536"/>
<dbReference type="InParanoid" id="P01824"/>
<dbReference type="OMA" id="CYLARNT"/>
<dbReference type="PAN-GO" id="P01824">
    <property type="GO annotations" value="11 GO annotations based on evolutionary models"/>
</dbReference>
<dbReference type="PhylomeDB" id="P01824"/>
<dbReference type="PathwayCommons" id="P01824"/>
<dbReference type="Reactome" id="R-HSA-166663">
    <property type="pathway name" value="Initial triggering of complement"/>
</dbReference>
<dbReference type="Reactome" id="R-HSA-173623">
    <property type="pathway name" value="Classical antibody-mediated complement activation"/>
</dbReference>
<dbReference type="Reactome" id="R-HSA-198933">
    <property type="pathway name" value="Immunoregulatory interactions between a Lymphoid and a non-Lymphoid cell"/>
</dbReference>
<dbReference type="Reactome" id="R-HSA-202733">
    <property type="pathway name" value="Cell surface interactions at the vascular wall"/>
</dbReference>
<dbReference type="Reactome" id="R-HSA-2029481">
    <property type="pathway name" value="FCGR activation"/>
</dbReference>
<dbReference type="Reactome" id="R-HSA-2029482">
    <property type="pathway name" value="Regulation of actin dynamics for phagocytic cup formation"/>
</dbReference>
<dbReference type="Reactome" id="R-HSA-2029485">
    <property type="pathway name" value="Role of phospholipids in phagocytosis"/>
</dbReference>
<dbReference type="Reactome" id="R-HSA-2168880">
    <property type="pathway name" value="Scavenging of heme from plasma"/>
</dbReference>
<dbReference type="Reactome" id="R-HSA-2454202">
    <property type="pathway name" value="Fc epsilon receptor (FCERI) signaling"/>
</dbReference>
<dbReference type="Reactome" id="R-HSA-2730905">
    <property type="pathway name" value="Role of LAT2/NTAL/LAB on calcium mobilization"/>
</dbReference>
<dbReference type="Reactome" id="R-HSA-2871796">
    <property type="pathway name" value="FCERI mediated MAPK activation"/>
</dbReference>
<dbReference type="Reactome" id="R-HSA-2871809">
    <property type="pathway name" value="FCERI mediated Ca+2 mobilization"/>
</dbReference>
<dbReference type="Reactome" id="R-HSA-2871837">
    <property type="pathway name" value="FCERI mediated NF-kB activation"/>
</dbReference>
<dbReference type="Reactome" id="R-HSA-5690714">
    <property type="pathway name" value="CD22 mediated BCR regulation"/>
</dbReference>
<dbReference type="Reactome" id="R-HSA-9664323">
    <property type="pathway name" value="FCGR3A-mediated IL10 synthesis"/>
</dbReference>
<dbReference type="Reactome" id="R-HSA-9664422">
    <property type="pathway name" value="FCGR3A-mediated phagocytosis"/>
</dbReference>
<dbReference type="Reactome" id="R-HSA-9679191">
    <property type="pathway name" value="Potential therapeutics for SARS"/>
</dbReference>
<dbReference type="Reactome" id="R-HSA-977606">
    <property type="pathway name" value="Regulation of Complement cascade"/>
</dbReference>
<dbReference type="Reactome" id="R-HSA-983695">
    <property type="pathway name" value="Antigen activates B Cell Receptor (BCR) leading to generation of second messengers"/>
</dbReference>
<dbReference type="ChiTaRS" id="IGHV4-39">
    <property type="organism name" value="human"/>
</dbReference>
<dbReference type="Pharos" id="P01824">
    <property type="development level" value="Tdark"/>
</dbReference>
<dbReference type="PRO" id="PR:P01824"/>
<dbReference type="Proteomes" id="UP000005640">
    <property type="component" value="Chromosome 14"/>
</dbReference>
<dbReference type="RNAct" id="P01824">
    <property type="molecule type" value="protein"/>
</dbReference>
<dbReference type="Bgee" id="ENSG00000211959">
    <property type="expression patterns" value="Expressed in rectum and 90 other cell types or tissues"/>
</dbReference>
<dbReference type="GO" id="GO:0005576">
    <property type="term" value="C:extracellular region"/>
    <property type="evidence" value="ECO:0000304"/>
    <property type="project" value="Reactome"/>
</dbReference>
<dbReference type="GO" id="GO:0019814">
    <property type="term" value="C:immunoglobulin complex"/>
    <property type="evidence" value="ECO:0007669"/>
    <property type="project" value="UniProtKB-KW"/>
</dbReference>
<dbReference type="GO" id="GO:0005886">
    <property type="term" value="C:plasma membrane"/>
    <property type="evidence" value="ECO:0000304"/>
    <property type="project" value="Reactome"/>
</dbReference>
<dbReference type="GO" id="GO:0003823">
    <property type="term" value="F:antigen binding"/>
    <property type="evidence" value="ECO:0000318"/>
    <property type="project" value="GO_Central"/>
</dbReference>
<dbReference type="GO" id="GO:0006955">
    <property type="term" value="P:immune response"/>
    <property type="evidence" value="ECO:0000303"/>
    <property type="project" value="UniProtKB"/>
</dbReference>
<dbReference type="GO" id="GO:0016064">
    <property type="term" value="P:immunoglobulin mediated immune response"/>
    <property type="evidence" value="ECO:0000318"/>
    <property type="project" value="GO_Central"/>
</dbReference>
<dbReference type="FunFam" id="2.60.40.10:FF:001119">
    <property type="entry name" value="Immunoglobulin heavy variable 4-30-4"/>
    <property type="match status" value="1"/>
</dbReference>
<dbReference type="Gene3D" id="2.60.40.10">
    <property type="entry name" value="Immunoglobulins"/>
    <property type="match status" value="1"/>
</dbReference>
<dbReference type="InterPro" id="IPR007110">
    <property type="entry name" value="Ig-like_dom"/>
</dbReference>
<dbReference type="InterPro" id="IPR036179">
    <property type="entry name" value="Ig-like_dom_sf"/>
</dbReference>
<dbReference type="InterPro" id="IPR013783">
    <property type="entry name" value="Ig-like_fold"/>
</dbReference>
<dbReference type="InterPro" id="IPR013106">
    <property type="entry name" value="Ig_V-set"/>
</dbReference>
<dbReference type="InterPro" id="IPR050199">
    <property type="entry name" value="IgHV"/>
</dbReference>
<dbReference type="PANTHER" id="PTHR23266">
    <property type="entry name" value="IMMUNOGLOBULIN HEAVY CHAIN"/>
    <property type="match status" value="1"/>
</dbReference>
<dbReference type="Pfam" id="PF07686">
    <property type="entry name" value="V-set"/>
    <property type="match status" value="1"/>
</dbReference>
<dbReference type="SMART" id="SM00406">
    <property type="entry name" value="IGv"/>
    <property type="match status" value="1"/>
</dbReference>
<dbReference type="SUPFAM" id="SSF48726">
    <property type="entry name" value="Immunoglobulin"/>
    <property type="match status" value="1"/>
</dbReference>
<dbReference type="PROSITE" id="PS50835">
    <property type="entry name" value="IG_LIKE"/>
    <property type="match status" value="1"/>
</dbReference>